<gene>
    <name evidence="1" type="primary">lexA</name>
    <name type="ordered locus">SAOUHSC_01333</name>
</gene>
<organism>
    <name type="scientific">Staphylococcus aureus (strain NCTC 8325 / PS 47)</name>
    <dbReference type="NCBI Taxonomy" id="93061"/>
    <lineage>
        <taxon>Bacteria</taxon>
        <taxon>Bacillati</taxon>
        <taxon>Bacillota</taxon>
        <taxon>Bacilli</taxon>
        <taxon>Bacillales</taxon>
        <taxon>Staphylococcaceae</taxon>
        <taxon>Staphylococcus</taxon>
    </lineage>
</organism>
<name>LEXA_STAA8</name>
<comment type="function">
    <text evidence="1">Represses a number of genes involved in the response to DNA damage (SOS response), including recA and lexA. In the presence of single-stranded DNA, RecA interacts with LexA causing an autocatalytic cleavage which disrupts the DNA-binding part of LexA, leading to derepression of the SOS regulon and eventually DNA repair.</text>
</comment>
<comment type="catalytic activity">
    <reaction evidence="1">
        <text>Hydrolysis of Ala-|-Gly bond in repressor LexA.</text>
        <dbReference type="EC" id="3.4.21.88"/>
    </reaction>
</comment>
<comment type="subunit">
    <text evidence="1">Homodimer.</text>
</comment>
<comment type="similarity">
    <text evidence="1">Belongs to the peptidase S24 family.</text>
</comment>
<feature type="chain" id="PRO_0000322762" description="LexA repressor">
    <location>
        <begin position="1"/>
        <end position="207"/>
    </location>
</feature>
<feature type="DNA-binding region" description="H-T-H motif" evidence="1">
    <location>
        <begin position="28"/>
        <end position="48"/>
    </location>
</feature>
<feature type="active site" description="For autocatalytic cleavage activity" evidence="1">
    <location>
        <position position="130"/>
    </location>
</feature>
<feature type="active site" description="For autocatalytic cleavage activity" evidence="1">
    <location>
        <position position="168"/>
    </location>
</feature>
<feature type="site" description="Cleavage; by autolysis" evidence="1">
    <location>
        <begin position="93"/>
        <end position="94"/>
    </location>
</feature>
<accession>Q2FYU1</accession>
<proteinExistence type="inferred from homology"/>
<sequence>MRELTKRQSEIYNYIKQVVQTKGYPPSVREIGEAVGLASSSTVHGHLSRLEEKGYIRRDPTKPRAIEIVSDQTNDNINMEETIHVPVIGKVTAGVPITAVENIEEYFPLPEHLTSTHNSDIFILNVVGDSMIEAGILDGDKVIVRSQTIAENGDIIVAMTEEDEATVKRFYKEKNRYRLQPENSTMEPIYLDNVAVIGKVIGLYREM</sequence>
<reference key="1">
    <citation type="book" date="2006" name="Gram positive pathogens, 2nd edition">
        <title>The Staphylococcus aureus NCTC 8325 genome.</title>
        <editorList>
            <person name="Fischetti V."/>
            <person name="Novick R."/>
            <person name="Ferretti J."/>
            <person name="Portnoy D."/>
            <person name="Rood J."/>
        </editorList>
        <authorList>
            <person name="Gillaspy A.F."/>
            <person name="Worrell V."/>
            <person name="Orvis J."/>
            <person name="Roe B.A."/>
            <person name="Dyer D.W."/>
            <person name="Iandolo J.J."/>
        </authorList>
    </citation>
    <scope>NUCLEOTIDE SEQUENCE [LARGE SCALE GENOMIC DNA]</scope>
    <source>
        <strain>NCTC 8325 / PS 47</strain>
    </source>
</reference>
<keyword id="KW-0068">Autocatalytic cleavage</keyword>
<keyword id="KW-0227">DNA damage</keyword>
<keyword id="KW-0234">DNA repair</keyword>
<keyword id="KW-0235">DNA replication</keyword>
<keyword id="KW-0238">DNA-binding</keyword>
<keyword id="KW-0378">Hydrolase</keyword>
<keyword id="KW-1185">Reference proteome</keyword>
<keyword id="KW-0678">Repressor</keyword>
<keyword id="KW-0742">SOS response</keyword>
<keyword id="KW-0804">Transcription</keyword>
<keyword id="KW-0805">Transcription regulation</keyword>
<dbReference type="EC" id="3.4.21.88" evidence="1"/>
<dbReference type="EMBL" id="CP000253">
    <property type="protein sequence ID" value="ABD30431.1"/>
    <property type="molecule type" value="Genomic_DNA"/>
</dbReference>
<dbReference type="RefSeq" id="WP_001208760.1">
    <property type="nucleotide sequence ID" value="NZ_LS483365.1"/>
</dbReference>
<dbReference type="RefSeq" id="YP_499863.1">
    <property type="nucleotide sequence ID" value="NC_007795.1"/>
</dbReference>
<dbReference type="SMR" id="Q2FYU1"/>
<dbReference type="STRING" id="93061.SAOUHSC_01333"/>
<dbReference type="MEROPS" id="S24.001"/>
<dbReference type="PaxDb" id="1280-SAXN108_1356"/>
<dbReference type="GeneID" id="3920198"/>
<dbReference type="KEGG" id="sao:SAOUHSC_01333"/>
<dbReference type="PATRIC" id="fig|93061.5.peg.1218"/>
<dbReference type="eggNOG" id="COG1974">
    <property type="taxonomic scope" value="Bacteria"/>
</dbReference>
<dbReference type="HOGENOM" id="CLU_066192_45_1_9"/>
<dbReference type="OrthoDB" id="9802364at2"/>
<dbReference type="PRO" id="PR:Q2FYU1"/>
<dbReference type="Proteomes" id="UP000008816">
    <property type="component" value="Chromosome"/>
</dbReference>
<dbReference type="GO" id="GO:0032993">
    <property type="term" value="C:protein-DNA complex"/>
    <property type="evidence" value="ECO:0000318"/>
    <property type="project" value="GO_Central"/>
</dbReference>
<dbReference type="GO" id="GO:0001217">
    <property type="term" value="F:DNA-binding transcription repressor activity"/>
    <property type="evidence" value="ECO:0000318"/>
    <property type="project" value="GO_Central"/>
</dbReference>
<dbReference type="GO" id="GO:0043565">
    <property type="term" value="F:sequence-specific DNA binding"/>
    <property type="evidence" value="ECO:0000318"/>
    <property type="project" value="GO_Central"/>
</dbReference>
<dbReference type="GO" id="GO:0004252">
    <property type="term" value="F:serine-type endopeptidase activity"/>
    <property type="evidence" value="ECO:0007669"/>
    <property type="project" value="UniProtKB-UniRule"/>
</dbReference>
<dbReference type="GO" id="GO:0006281">
    <property type="term" value="P:DNA repair"/>
    <property type="evidence" value="ECO:0007669"/>
    <property type="project" value="UniProtKB-UniRule"/>
</dbReference>
<dbReference type="GO" id="GO:0006260">
    <property type="term" value="P:DNA replication"/>
    <property type="evidence" value="ECO:0007669"/>
    <property type="project" value="UniProtKB-UniRule"/>
</dbReference>
<dbReference type="GO" id="GO:0045892">
    <property type="term" value="P:negative regulation of DNA-templated transcription"/>
    <property type="evidence" value="ECO:0000318"/>
    <property type="project" value="GO_Central"/>
</dbReference>
<dbReference type="GO" id="GO:0006508">
    <property type="term" value="P:proteolysis"/>
    <property type="evidence" value="ECO:0007669"/>
    <property type="project" value="InterPro"/>
</dbReference>
<dbReference type="GO" id="GO:0009432">
    <property type="term" value="P:SOS response"/>
    <property type="evidence" value="ECO:0000318"/>
    <property type="project" value="GO_Central"/>
</dbReference>
<dbReference type="CDD" id="cd00090">
    <property type="entry name" value="HTH_ARSR"/>
    <property type="match status" value="1"/>
</dbReference>
<dbReference type="CDD" id="cd06529">
    <property type="entry name" value="S24_LexA-like"/>
    <property type="match status" value="1"/>
</dbReference>
<dbReference type="FunFam" id="1.10.10.10:FF:000009">
    <property type="entry name" value="LexA repressor"/>
    <property type="match status" value="1"/>
</dbReference>
<dbReference type="FunFam" id="2.10.109.10:FF:000001">
    <property type="entry name" value="LexA repressor"/>
    <property type="match status" value="1"/>
</dbReference>
<dbReference type="Gene3D" id="2.10.109.10">
    <property type="entry name" value="Umud Fragment, subunit A"/>
    <property type="match status" value="1"/>
</dbReference>
<dbReference type="Gene3D" id="1.10.10.10">
    <property type="entry name" value="Winged helix-like DNA-binding domain superfamily/Winged helix DNA-binding domain"/>
    <property type="match status" value="1"/>
</dbReference>
<dbReference type="HAMAP" id="MF_00015">
    <property type="entry name" value="LexA"/>
    <property type="match status" value="1"/>
</dbReference>
<dbReference type="InterPro" id="IPR011991">
    <property type="entry name" value="ArsR-like_HTH"/>
</dbReference>
<dbReference type="InterPro" id="IPR006200">
    <property type="entry name" value="LexA"/>
</dbReference>
<dbReference type="InterPro" id="IPR039418">
    <property type="entry name" value="LexA-like"/>
</dbReference>
<dbReference type="InterPro" id="IPR036286">
    <property type="entry name" value="LexA/Signal_pep-like_sf"/>
</dbReference>
<dbReference type="InterPro" id="IPR006199">
    <property type="entry name" value="LexA_DNA-bd_dom"/>
</dbReference>
<dbReference type="InterPro" id="IPR050077">
    <property type="entry name" value="LexA_repressor"/>
</dbReference>
<dbReference type="InterPro" id="IPR006197">
    <property type="entry name" value="Peptidase_S24_LexA"/>
</dbReference>
<dbReference type="InterPro" id="IPR015927">
    <property type="entry name" value="Peptidase_S24_S26A/B/C"/>
</dbReference>
<dbReference type="InterPro" id="IPR036388">
    <property type="entry name" value="WH-like_DNA-bd_sf"/>
</dbReference>
<dbReference type="InterPro" id="IPR036390">
    <property type="entry name" value="WH_DNA-bd_sf"/>
</dbReference>
<dbReference type="NCBIfam" id="TIGR00498">
    <property type="entry name" value="lexA"/>
    <property type="match status" value="1"/>
</dbReference>
<dbReference type="PANTHER" id="PTHR33516">
    <property type="entry name" value="LEXA REPRESSOR"/>
    <property type="match status" value="1"/>
</dbReference>
<dbReference type="PANTHER" id="PTHR33516:SF2">
    <property type="entry name" value="LEXA REPRESSOR-RELATED"/>
    <property type="match status" value="1"/>
</dbReference>
<dbReference type="Pfam" id="PF01726">
    <property type="entry name" value="LexA_DNA_bind"/>
    <property type="match status" value="1"/>
</dbReference>
<dbReference type="Pfam" id="PF00717">
    <property type="entry name" value="Peptidase_S24"/>
    <property type="match status" value="1"/>
</dbReference>
<dbReference type="PRINTS" id="PR00726">
    <property type="entry name" value="LEXASERPTASE"/>
</dbReference>
<dbReference type="SUPFAM" id="SSF51306">
    <property type="entry name" value="LexA/Signal peptidase"/>
    <property type="match status" value="1"/>
</dbReference>
<dbReference type="SUPFAM" id="SSF46785">
    <property type="entry name" value="Winged helix' DNA-binding domain"/>
    <property type="match status" value="1"/>
</dbReference>
<evidence type="ECO:0000255" key="1">
    <source>
        <dbReference type="HAMAP-Rule" id="MF_00015"/>
    </source>
</evidence>
<protein>
    <recommendedName>
        <fullName evidence="1">LexA repressor</fullName>
        <ecNumber evidence="1">3.4.21.88</ecNumber>
    </recommendedName>
</protein>